<accession>Q7MH33</accession>
<proteinExistence type="inferred from homology"/>
<reference key="1">
    <citation type="journal article" date="2003" name="Genome Res.">
        <title>Comparative genome analysis of Vibrio vulnificus, a marine pathogen.</title>
        <authorList>
            <person name="Chen C.-Y."/>
            <person name="Wu K.-M."/>
            <person name="Chang Y.-C."/>
            <person name="Chang C.-H."/>
            <person name="Tsai H.-C."/>
            <person name="Liao T.-L."/>
            <person name="Liu Y.-M."/>
            <person name="Chen H.-J."/>
            <person name="Shen A.B.-T."/>
            <person name="Li J.-C."/>
            <person name="Su T.-L."/>
            <person name="Shao C.-P."/>
            <person name="Lee C.-T."/>
            <person name="Hor L.-I."/>
            <person name="Tsai S.-F."/>
        </authorList>
    </citation>
    <scope>NUCLEOTIDE SEQUENCE [LARGE SCALE GENOMIC DNA]</scope>
    <source>
        <strain>YJ016</strain>
    </source>
</reference>
<dbReference type="EMBL" id="BA000037">
    <property type="protein sequence ID" value="BAC95803.1"/>
    <property type="status" value="ALT_INIT"/>
    <property type="molecule type" value="Genomic_DNA"/>
</dbReference>
<dbReference type="RefSeq" id="WP_011079308.1">
    <property type="nucleotide sequence ID" value="NC_005139.1"/>
</dbReference>
<dbReference type="SMR" id="Q7MH33"/>
<dbReference type="STRING" id="672.VV93_v1c27670"/>
<dbReference type="KEGG" id="vvy:VV3039"/>
<dbReference type="eggNOG" id="COG2900">
    <property type="taxonomic scope" value="Bacteria"/>
</dbReference>
<dbReference type="HOGENOM" id="CLU_180796_4_0_6"/>
<dbReference type="Proteomes" id="UP000002675">
    <property type="component" value="Chromosome I"/>
</dbReference>
<dbReference type="Gene3D" id="1.20.5.300">
    <property type="match status" value="1"/>
</dbReference>
<dbReference type="HAMAP" id="MF_00715">
    <property type="entry name" value="SlyX"/>
    <property type="match status" value="1"/>
</dbReference>
<dbReference type="InterPro" id="IPR007236">
    <property type="entry name" value="SlyX"/>
</dbReference>
<dbReference type="NCBIfam" id="NF003357">
    <property type="entry name" value="PRK04406.1"/>
    <property type="match status" value="1"/>
</dbReference>
<dbReference type="PANTHER" id="PTHR36508">
    <property type="entry name" value="PROTEIN SLYX"/>
    <property type="match status" value="1"/>
</dbReference>
<dbReference type="PANTHER" id="PTHR36508:SF1">
    <property type="entry name" value="PROTEIN SLYX"/>
    <property type="match status" value="1"/>
</dbReference>
<dbReference type="Pfam" id="PF04102">
    <property type="entry name" value="SlyX"/>
    <property type="match status" value="1"/>
</dbReference>
<name>SLYX_VIBVY</name>
<organism>
    <name type="scientific">Vibrio vulnificus (strain YJ016)</name>
    <dbReference type="NCBI Taxonomy" id="196600"/>
    <lineage>
        <taxon>Bacteria</taxon>
        <taxon>Pseudomonadati</taxon>
        <taxon>Pseudomonadota</taxon>
        <taxon>Gammaproteobacteria</taxon>
        <taxon>Vibrionales</taxon>
        <taxon>Vibrionaceae</taxon>
        <taxon>Vibrio</taxon>
    </lineage>
</organism>
<gene>
    <name evidence="1" type="primary">slyX</name>
    <name type="ordered locus">VV3039</name>
</gene>
<feature type="chain" id="PRO_0000209219" description="Protein SlyX homolog">
    <location>
        <begin position="1"/>
        <end position="75"/>
    </location>
</feature>
<protein>
    <recommendedName>
        <fullName evidence="1">Protein SlyX homolog</fullName>
    </recommendedName>
</protein>
<evidence type="ECO:0000255" key="1">
    <source>
        <dbReference type="HAMAP-Rule" id="MF_00715"/>
    </source>
</evidence>
<evidence type="ECO:0000305" key="2"/>
<comment type="similarity">
    <text evidence="1">Belongs to the SlyX family.</text>
</comment>
<comment type="sequence caution" evidence="2">
    <conflict type="erroneous initiation">
        <sequence resource="EMBL-CDS" id="BAC95803"/>
    </conflict>
</comment>
<sequence length="75" mass="8637">MTEKTIALLENRINDLECQVAFQEQTIEELNDALTQQQLLIAKMQDQMKYVVGKMKNMDSSNMVDPAKEPPPPHY</sequence>